<comment type="function">
    <text evidence="1">Catalyzes the sequential NAD-dependent oxidations of L-histidinol to L-histidinaldehyde and then to L-histidine.</text>
</comment>
<comment type="catalytic activity">
    <reaction evidence="1">
        <text>L-histidinol + 2 NAD(+) + H2O = L-histidine + 2 NADH + 3 H(+)</text>
        <dbReference type="Rhea" id="RHEA:20641"/>
        <dbReference type="ChEBI" id="CHEBI:15377"/>
        <dbReference type="ChEBI" id="CHEBI:15378"/>
        <dbReference type="ChEBI" id="CHEBI:57540"/>
        <dbReference type="ChEBI" id="CHEBI:57595"/>
        <dbReference type="ChEBI" id="CHEBI:57699"/>
        <dbReference type="ChEBI" id="CHEBI:57945"/>
        <dbReference type="EC" id="1.1.1.23"/>
    </reaction>
</comment>
<comment type="cofactor">
    <cofactor evidence="1">
        <name>Zn(2+)</name>
        <dbReference type="ChEBI" id="CHEBI:29105"/>
    </cofactor>
    <text evidence="1">Binds 1 zinc ion per subunit.</text>
</comment>
<comment type="pathway">
    <text evidence="1">Amino-acid biosynthesis; L-histidine biosynthesis; L-histidine from 5-phospho-alpha-D-ribose 1-diphosphate: step 9/9.</text>
</comment>
<comment type="similarity">
    <text evidence="1">Belongs to the histidinol dehydrogenase family.</text>
</comment>
<organism>
    <name type="scientific">Listeria monocytogenes serovar 1/2a (strain ATCC BAA-679 / EGD-e)</name>
    <dbReference type="NCBI Taxonomy" id="169963"/>
    <lineage>
        <taxon>Bacteria</taxon>
        <taxon>Bacillati</taxon>
        <taxon>Bacillota</taxon>
        <taxon>Bacilli</taxon>
        <taxon>Bacillales</taxon>
        <taxon>Listeriaceae</taxon>
        <taxon>Listeria</taxon>
    </lineage>
</organism>
<sequence length="427" mass="46230">MKILTGTINELLNEVKAENNTNNSLQVESEVKSIIEKVKKDGDQALFDFTSQFDGVRLTELRVQTADIQSASSKVDPAFLVALQQAKANIESFHSKQKQHAFLDSEKDGVIRGQLIRPLETVGIYVPGGTAAYPSSVLMNVLPAKIAGVKRIVMITPPAENGINPHVLAAAQLAGVDEIYQVGGAHGIAALAHGTESIPKVDKIVGPGNIYVATAKREVFGLVDIDMIAGPSEIVVLADENANPAFIASDLLSQAEHDILARAILITTSKKIAEETQNEINKQLENLPRKAIAQKSIETQGKIIIAANTQEMFDIMNEIAPEHLEVQLENPMNYLNQIKNAGSIFLGSYASEPLGDYFAGPNHVLPTSGTAKFFSPLGVEDFTKRSAFISYTKEALAKEKDAIVLLAKKEGLDAHAKAIQIRFEEEN</sequence>
<keyword id="KW-0028">Amino-acid biosynthesis</keyword>
<keyword id="KW-0368">Histidine biosynthesis</keyword>
<keyword id="KW-0479">Metal-binding</keyword>
<keyword id="KW-0520">NAD</keyword>
<keyword id="KW-0560">Oxidoreductase</keyword>
<keyword id="KW-1185">Reference proteome</keyword>
<keyword id="KW-0862">Zinc</keyword>
<protein>
    <recommendedName>
        <fullName evidence="1">Histidinol dehydrogenase</fullName>
        <shortName evidence="1">HDH</shortName>
        <ecNumber evidence="1">1.1.1.23</ecNumber>
    </recommendedName>
</protein>
<gene>
    <name evidence="1" type="primary">hisD</name>
    <name type="ordered locus">lmo0567</name>
</gene>
<evidence type="ECO:0000255" key="1">
    <source>
        <dbReference type="HAMAP-Rule" id="MF_01024"/>
    </source>
</evidence>
<reference key="1">
    <citation type="journal article" date="2001" name="Science">
        <title>Comparative genomics of Listeria species.</title>
        <authorList>
            <person name="Glaser P."/>
            <person name="Frangeul L."/>
            <person name="Buchrieser C."/>
            <person name="Rusniok C."/>
            <person name="Amend A."/>
            <person name="Baquero F."/>
            <person name="Berche P."/>
            <person name="Bloecker H."/>
            <person name="Brandt P."/>
            <person name="Chakraborty T."/>
            <person name="Charbit A."/>
            <person name="Chetouani F."/>
            <person name="Couve E."/>
            <person name="de Daruvar A."/>
            <person name="Dehoux P."/>
            <person name="Domann E."/>
            <person name="Dominguez-Bernal G."/>
            <person name="Duchaud E."/>
            <person name="Durant L."/>
            <person name="Dussurget O."/>
            <person name="Entian K.-D."/>
            <person name="Fsihi H."/>
            <person name="Garcia-del Portillo F."/>
            <person name="Garrido P."/>
            <person name="Gautier L."/>
            <person name="Goebel W."/>
            <person name="Gomez-Lopez N."/>
            <person name="Hain T."/>
            <person name="Hauf J."/>
            <person name="Jackson D."/>
            <person name="Jones L.-M."/>
            <person name="Kaerst U."/>
            <person name="Kreft J."/>
            <person name="Kuhn M."/>
            <person name="Kunst F."/>
            <person name="Kurapkat G."/>
            <person name="Madueno E."/>
            <person name="Maitournam A."/>
            <person name="Mata Vicente J."/>
            <person name="Ng E."/>
            <person name="Nedjari H."/>
            <person name="Nordsiek G."/>
            <person name="Novella S."/>
            <person name="de Pablos B."/>
            <person name="Perez-Diaz J.-C."/>
            <person name="Purcell R."/>
            <person name="Remmel B."/>
            <person name="Rose M."/>
            <person name="Schlueter T."/>
            <person name="Simoes N."/>
            <person name="Tierrez A."/>
            <person name="Vazquez-Boland J.-A."/>
            <person name="Voss H."/>
            <person name="Wehland J."/>
            <person name="Cossart P."/>
        </authorList>
    </citation>
    <scope>NUCLEOTIDE SEQUENCE [LARGE SCALE GENOMIC DNA]</scope>
    <source>
        <strain>ATCC BAA-679 / EGD-e</strain>
    </source>
</reference>
<name>HISX_LISMO</name>
<dbReference type="EC" id="1.1.1.23" evidence="1"/>
<dbReference type="EMBL" id="AL591975">
    <property type="protein sequence ID" value="CAC98646.1"/>
    <property type="molecule type" value="Genomic_DNA"/>
</dbReference>
<dbReference type="PIR" id="AH1145">
    <property type="entry name" value="AH1145"/>
</dbReference>
<dbReference type="RefSeq" id="NP_464095.1">
    <property type="nucleotide sequence ID" value="NC_003210.1"/>
</dbReference>
<dbReference type="RefSeq" id="WP_009930740.1">
    <property type="nucleotide sequence ID" value="NZ_CP149495.1"/>
</dbReference>
<dbReference type="SMR" id="Q8Y9G1"/>
<dbReference type="STRING" id="169963.gene:17593218"/>
<dbReference type="PaxDb" id="169963-lmo0567"/>
<dbReference type="EnsemblBacteria" id="CAC98646">
    <property type="protein sequence ID" value="CAC98646"/>
    <property type="gene ID" value="CAC98646"/>
</dbReference>
<dbReference type="GeneID" id="985596"/>
<dbReference type="KEGG" id="lmo:lmo0567"/>
<dbReference type="PATRIC" id="fig|169963.11.peg.586"/>
<dbReference type="eggNOG" id="COG0141">
    <property type="taxonomic scope" value="Bacteria"/>
</dbReference>
<dbReference type="HOGENOM" id="CLU_006732_3_3_9"/>
<dbReference type="OrthoDB" id="9805269at2"/>
<dbReference type="PhylomeDB" id="Q8Y9G1"/>
<dbReference type="BioCyc" id="LMON169963:LMO0567-MONOMER"/>
<dbReference type="UniPathway" id="UPA00031">
    <property type="reaction ID" value="UER00014"/>
</dbReference>
<dbReference type="Proteomes" id="UP000000817">
    <property type="component" value="Chromosome"/>
</dbReference>
<dbReference type="GO" id="GO:0005737">
    <property type="term" value="C:cytoplasm"/>
    <property type="evidence" value="ECO:0000318"/>
    <property type="project" value="GO_Central"/>
</dbReference>
<dbReference type="GO" id="GO:0005829">
    <property type="term" value="C:cytosol"/>
    <property type="evidence" value="ECO:0000318"/>
    <property type="project" value="GO_Central"/>
</dbReference>
<dbReference type="GO" id="GO:0004399">
    <property type="term" value="F:histidinol dehydrogenase activity"/>
    <property type="evidence" value="ECO:0000318"/>
    <property type="project" value="GO_Central"/>
</dbReference>
<dbReference type="GO" id="GO:0051287">
    <property type="term" value="F:NAD binding"/>
    <property type="evidence" value="ECO:0007669"/>
    <property type="project" value="InterPro"/>
</dbReference>
<dbReference type="GO" id="GO:0008270">
    <property type="term" value="F:zinc ion binding"/>
    <property type="evidence" value="ECO:0007669"/>
    <property type="project" value="UniProtKB-UniRule"/>
</dbReference>
<dbReference type="GO" id="GO:0000105">
    <property type="term" value="P:L-histidine biosynthetic process"/>
    <property type="evidence" value="ECO:0000318"/>
    <property type="project" value="GO_Central"/>
</dbReference>
<dbReference type="CDD" id="cd06572">
    <property type="entry name" value="Histidinol_dh"/>
    <property type="match status" value="1"/>
</dbReference>
<dbReference type="FunFam" id="3.40.50.1980:FF:000001">
    <property type="entry name" value="Histidinol dehydrogenase"/>
    <property type="match status" value="1"/>
</dbReference>
<dbReference type="FunFam" id="3.40.50.1980:FF:000026">
    <property type="entry name" value="Histidinol dehydrogenase"/>
    <property type="match status" value="1"/>
</dbReference>
<dbReference type="FunFam" id="1.20.5.1300:FF:000002">
    <property type="entry name" value="Histidinol dehydrogenase, chloroplastic"/>
    <property type="match status" value="1"/>
</dbReference>
<dbReference type="Gene3D" id="1.20.5.1300">
    <property type="match status" value="1"/>
</dbReference>
<dbReference type="Gene3D" id="3.40.50.1980">
    <property type="entry name" value="Nitrogenase molybdenum iron protein domain"/>
    <property type="match status" value="2"/>
</dbReference>
<dbReference type="HAMAP" id="MF_01024">
    <property type="entry name" value="HisD"/>
    <property type="match status" value="1"/>
</dbReference>
<dbReference type="InterPro" id="IPR016161">
    <property type="entry name" value="Ald_DH/histidinol_DH"/>
</dbReference>
<dbReference type="InterPro" id="IPR001692">
    <property type="entry name" value="Histidinol_DH_CS"/>
</dbReference>
<dbReference type="InterPro" id="IPR022695">
    <property type="entry name" value="Histidinol_DH_monofunct"/>
</dbReference>
<dbReference type="InterPro" id="IPR012131">
    <property type="entry name" value="Hstdl_DH"/>
</dbReference>
<dbReference type="NCBIfam" id="TIGR00069">
    <property type="entry name" value="hisD"/>
    <property type="match status" value="1"/>
</dbReference>
<dbReference type="PANTHER" id="PTHR21256:SF2">
    <property type="entry name" value="HISTIDINE BIOSYNTHESIS TRIFUNCTIONAL PROTEIN"/>
    <property type="match status" value="1"/>
</dbReference>
<dbReference type="PANTHER" id="PTHR21256">
    <property type="entry name" value="HISTIDINOL DEHYDROGENASE HDH"/>
    <property type="match status" value="1"/>
</dbReference>
<dbReference type="Pfam" id="PF00815">
    <property type="entry name" value="Histidinol_dh"/>
    <property type="match status" value="1"/>
</dbReference>
<dbReference type="PIRSF" id="PIRSF000099">
    <property type="entry name" value="Histidinol_dh"/>
    <property type="match status" value="1"/>
</dbReference>
<dbReference type="PRINTS" id="PR00083">
    <property type="entry name" value="HOLDHDRGNASE"/>
</dbReference>
<dbReference type="SUPFAM" id="SSF53720">
    <property type="entry name" value="ALDH-like"/>
    <property type="match status" value="1"/>
</dbReference>
<dbReference type="PROSITE" id="PS00611">
    <property type="entry name" value="HISOL_DEHYDROGENASE"/>
    <property type="match status" value="1"/>
</dbReference>
<feature type="chain" id="PRO_0000135791" description="Histidinol dehydrogenase">
    <location>
        <begin position="1"/>
        <end position="427"/>
    </location>
</feature>
<feature type="active site" description="Proton acceptor" evidence="1">
    <location>
        <position position="322"/>
    </location>
</feature>
<feature type="active site" description="Proton acceptor" evidence="1">
    <location>
        <position position="323"/>
    </location>
</feature>
<feature type="binding site" evidence="1">
    <location>
        <position position="232"/>
    </location>
    <ligand>
        <name>substrate</name>
    </ligand>
</feature>
<feature type="binding site" evidence="1">
    <location>
        <position position="254"/>
    </location>
    <ligand>
        <name>substrate</name>
    </ligand>
</feature>
<feature type="binding site" evidence="1">
    <location>
        <position position="254"/>
    </location>
    <ligand>
        <name>Zn(2+)</name>
        <dbReference type="ChEBI" id="CHEBI:29105"/>
    </ligand>
</feature>
<feature type="binding site" evidence="1">
    <location>
        <position position="257"/>
    </location>
    <ligand>
        <name>substrate</name>
    </ligand>
</feature>
<feature type="binding site" evidence="1">
    <location>
        <position position="257"/>
    </location>
    <ligand>
        <name>Zn(2+)</name>
        <dbReference type="ChEBI" id="CHEBI:29105"/>
    </ligand>
</feature>
<feature type="binding site" evidence="1">
    <location>
        <position position="323"/>
    </location>
    <ligand>
        <name>substrate</name>
    </ligand>
</feature>
<feature type="binding site" evidence="1">
    <location>
        <position position="356"/>
    </location>
    <ligand>
        <name>substrate</name>
    </ligand>
</feature>
<feature type="binding site" evidence="1">
    <location>
        <position position="356"/>
    </location>
    <ligand>
        <name>Zn(2+)</name>
        <dbReference type="ChEBI" id="CHEBI:29105"/>
    </ligand>
</feature>
<feature type="binding site" evidence="1">
    <location>
        <position position="410"/>
    </location>
    <ligand>
        <name>substrate</name>
    </ligand>
</feature>
<feature type="binding site" evidence="1">
    <location>
        <position position="415"/>
    </location>
    <ligand>
        <name>substrate</name>
    </ligand>
</feature>
<feature type="binding site" evidence="1">
    <location>
        <position position="415"/>
    </location>
    <ligand>
        <name>Zn(2+)</name>
        <dbReference type="ChEBI" id="CHEBI:29105"/>
    </ligand>
</feature>
<accession>Q8Y9G1</accession>
<proteinExistence type="inferred from homology"/>